<name>RL7_HALHL</name>
<feature type="chain" id="PRO_1000007018" description="Large ribosomal subunit protein bL12">
    <location>
        <begin position="1"/>
        <end position="128"/>
    </location>
</feature>
<gene>
    <name evidence="1" type="primary">rplL</name>
    <name type="ordered locus">Hhal_0866</name>
</gene>
<sequence length="128" mass="12898">MAASKDEILESIANMSVMEVVELIEAMEEKFGVTAAAAVAAAPAAGGGGGDEGGAAEEQTEFDVILSSHGDNKVGVIKAVRGVTGLGLKEAKEVVEGCPAPIKEGASKEEADDIKAKLEEAGASVELK</sequence>
<protein>
    <recommendedName>
        <fullName evidence="1">Large ribosomal subunit protein bL12</fullName>
    </recommendedName>
    <alternativeName>
        <fullName evidence="2">50S ribosomal protein L7/L12</fullName>
    </alternativeName>
</protein>
<accession>A1WVD0</accession>
<reference key="1">
    <citation type="submission" date="2006-12" db="EMBL/GenBank/DDBJ databases">
        <title>Complete sequence of Halorhodospira halophila SL1.</title>
        <authorList>
            <consortium name="US DOE Joint Genome Institute"/>
            <person name="Copeland A."/>
            <person name="Lucas S."/>
            <person name="Lapidus A."/>
            <person name="Barry K."/>
            <person name="Detter J.C."/>
            <person name="Glavina del Rio T."/>
            <person name="Hammon N."/>
            <person name="Israni S."/>
            <person name="Dalin E."/>
            <person name="Tice H."/>
            <person name="Pitluck S."/>
            <person name="Saunders E."/>
            <person name="Brettin T."/>
            <person name="Bruce D."/>
            <person name="Han C."/>
            <person name="Tapia R."/>
            <person name="Schmutz J."/>
            <person name="Larimer F."/>
            <person name="Land M."/>
            <person name="Hauser L."/>
            <person name="Kyrpides N."/>
            <person name="Mikhailova N."/>
            <person name="Hoff W."/>
            <person name="Richardson P."/>
        </authorList>
    </citation>
    <scope>NUCLEOTIDE SEQUENCE [LARGE SCALE GENOMIC DNA]</scope>
    <source>
        <strain>DSM 244 / SL1</strain>
    </source>
</reference>
<evidence type="ECO:0000255" key="1">
    <source>
        <dbReference type="HAMAP-Rule" id="MF_00368"/>
    </source>
</evidence>
<evidence type="ECO:0000305" key="2"/>
<proteinExistence type="inferred from homology"/>
<comment type="function">
    <text evidence="1">Forms part of the ribosomal stalk which helps the ribosome interact with GTP-bound translation factors. Is thus essential for accurate translation.</text>
</comment>
<comment type="subunit">
    <text evidence="1">Homodimer. Part of the ribosomal stalk of the 50S ribosomal subunit. Forms a multimeric L10(L12)X complex, where L10 forms an elongated spine to which 2 to 4 L12 dimers bind in a sequential fashion. Binds GTP-bound translation factors.</text>
</comment>
<comment type="similarity">
    <text evidence="1">Belongs to the bacterial ribosomal protein bL12 family.</text>
</comment>
<dbReference type="EMBL" id="CP000544">
    <property type="protein sequence ID" value="ABM61642.1"/>
    <property type="molecule type" value="Genomic_DNA"/>
</dbReference>
<dbReference type="RefSeq" id="WP_011813665.1">
    <property type="nucleotide sequence ID" value="NC_008789.1"/>
</dbReference>
<dbReference type="SMR" id="A1WVD0"/>
<dbReference type="STRING" id="349124.Hhal_0866"/>
<dbReference type="KEGG" id="hha:Hhal_0866"/>
<dbReference type="eggNOG" id="COG0222">
    <property type="taxonomic scope" value="Bacteria"/>
</dbReference>
<dbReference type="HOGENOM" id="CLU_086499_3_2_6"/>
<dbReference type="OrthoDB" id="9811748at2"/>
<dbReference type="Proteomes" id="UP000000647">
    <property type="component" value="Chromosome"/>
</dbReference>
<dbReference type="GO" id="GO:0022625">
    <property type="term" value="C:cytosolic large ribosomal subunit"/>
    <property type="evidence" value="ECO:0007669"/>
    <property type="project" value="TreeGrafter"/>
</dbReference>
<dbReference type="GO" id="GO:0003729">
    <property type="term" value="F:mRNA binding"/>
    <property type="evidence" value="ECO:0007669"/>
    <property type="project" value="TreeGrafter"/>
</dbReference>
<dbReference type="GO" id="GO:0003735">
    <property type="term" value="F:structural constituent of ribosome"/>
    <property type="evidence" value="ECO:0007669"/>
    <property type="project" value="InterPro"/>
</dbReference>
<dbReference type="GO" id="GO:0006412">
    <property type="term" value="P:translation"/>
    <property type="evidence" value="ECO:0007669"/>
    <property type="project" value="UniProtKB-UniRule"/>
</dbReference>
<dbReference type="CDD" id="cd00387">
    <property type="entry name" value="Ribosomal_L7_L12"/>
    <property type="match status" value="1"/>
</dbReference>
<dbReference type="FunFam" id="3.30.1390.10:FF:000001">
    <property type="entry name" value="50S ribosomal protein L7/L12"/>
    <property type="match status" value="1"/>
</dbReference>
<dbReference type="Gene3D" id="3.30.1390.10">
    <property type="match status" value="1"/>
</dbReference>
<dbReference type="Gene3D" id="1.20.5.710">
    <property type="entry name" value="Single helix bin"/>
    <property type="match status" value="1"/>
</dbReference>
<dbReference type="HAMAP" id="MF_00368">
    <property type="entry name" value="Ribosomal_bL12"/>
    <property type="match status" value="1"/>
</dbReference>
<dbReference type="InterPro" id="IPR000206">
    <property type="entry name" value="Ribosomal_bL12"/>
</dbReference>
<dbReference type="InterPro" id="IPR013823">
    <property type="entry name" value="Ribosomal_bL12_C"/>
</dbReference>
<dbReference type="InterPro" id="IPR014719">
    <property type="entry name" value="Ribosomal_bL12_C/ClpS-like"/>
</dbReference>
<dbReference type="InterPro" id="IPR008932">
    <property type="entry name" value="Ribosomal_bL12_oligo"/>
</dbReference>
<dbReference type="InterPro" id="IPR036235">
    <property type="entry name" value="Ribosomal_bL12_oligo_N_sf"/>
</dbReference>
<dbReference type="NCBIfam" id="TIGR00855">
    <property type="entry name" value="L12"/>
    <property type="match status" value="1"/>
</dbReference>
<dbReference type="PANTHER" id="PTHR45987">
    <property type="entry name" value="39S RIBOSOMAL PROTEIN L12"/>
    <property type="match status" value="1"/>
</dbReference>
<dbReference type="PANTHER" id="PTHR45987:SF4">
    <property type="entry name" value="LARGE RIBOSOMAL SUBUNIT PROTEIN BL12M"/>
    <property type="match status" value="1"/>
</dbReference>
<dbReference type="Pfam" id="PF00542">
    <property type="entry name" value="Ribosomal_L12"/>
    <property type="match status" value="1"/>
</dbReference>
<dbReference type="Pfam" id="PF16320">
    <property type="entry name" value="Ribosomal_L12_N"/>
    <property type="match status" value="1"/>
</dbReference>
<dbReference type="SUPFAM" id="SSF54736">
    <property type="entry name" value="ClpS-like"/>
    <property type="match status" value="1"/>
</dbReference>
<dbReference type="SUPFAM" id="SSF48300">
    <property type="entry name" value="Ribosomal protein L7/12, oligomerisation (N-terminal) domain"/>
    <property type="match status" value="1"/>
</dbReference>
<keyword id="KW-1185">Reference proteome</keyword>
<keyword id="KW-0687">Ribonucleoprotein</keyword>
<keyword id="KW-0689">Ribosomal protein</keyword>
<organism>
    <name type="scientific">Halorhodospira halophila (strain DSM 244 / SL1)</name>
    <name type="common">Ectothiorhodospira halophila (strain DSM 244 / SL1)</name>
    <dbReference type="NCBI Taxonomy" id="349124"/>
    <lineage>
        <taxon>Bacteria</taxon>
        <taxon>Pseudomonadati</taxon>
        <taxon>Pseudomonadota</taxon>
        <taxon>Gammaproteobacteria</taxon>
        <taxon>Chromatiales</taxon>
        <taxon>Ectothiorhodospiraceae</taxon>
        <taxon>Halorhodospira</taxon>
    </lineage>
</organism>